<dbReference type="EMBL" id="AE016826">
    <property type="protein sequence ID" value="AAO26793.1"/>
    <property type="molecule type" value="Genomic_DNA"/>
</dbReference>
<dbReference type="RefSeq" id="WP_011091194.1">
    <property type="nucleotide sequence ID" value="NC_004545.1"/>
</dbReference>
<dbReference type="SMR" id="Q89B08"/>
<dbReference type="STRING" id="224915.bbp_054"/>
<dbReference type="KEGG" id="bab:bbp_054"/>
<dbReference type="eggNOG" id="COG0828">
    <property type="taxonomic scope" value="Bacteria"/>
</dbReference>
<dbReference type="HOGENOM" id="CLU_159258_1_0_6"/>
<dbReference type="OrthoDB" id="9799244at2"/>
<dbReference type="Proteomes" id="UP000000601">
    <property type="component" value="Chromosome"/>
</dbReference>
<dbReference type="GO" id="GO:1990904">
    <property type="term" value="C:ribonucleoprotein complex"/>
    <property type="evidence" value="ECO:0007669"/>
    <property type="project" value="UniProtKB-KW"/>
</dbReference>
<dbReference type="GO" id="GO:0005840">
    <property type="term" value="C:ribosome"/>
    <property type="evidence" value="ECO:0007669"/>
    <property type="project" value="UniProtKB-KW"/>
</dbReference>
<dbReference type="GO" id="GO:0003735">
    <property type="term" value="F:structural constituent of ribosome"/>
    <property type="evidence" value="ECO:0007669"/>
    <property type="project" value="InterPro"/>
</dbReference>
<dbReference type="GO" id="GO:0006412">
    <property type="term" value="P:translation"/>
    <property type="evidence" value="ECO:0007669"/>
    <property type="project" value="UniProtKB-UniRule"/>
</dbReference>
<dbReference type="FunFam" id="1.20.5.1150:FF:000001">
    <property type="entry name" value="30S ribosomal protein S21"/>
    <property type="match status" value="1"/>
</dbReference>
<dbReference type="Gene3D" id="1.20.5.1150">
    <property type="entry name" value="Ribosomal protein S8"/>
    <property type="match status" value="1"/>
</dbReference>
<dbReference type="HAMAP" id="MF_00358">
    <property type="entry name" value="Ribosomal_bS21"/>
    <property type="match status" value="1"/>
</dbReference>
<dbReference type="InterPro" id="IPR001911">
    <property type="entry name" value="Ribosomal_bS21"/>
</dbReference>
<dbReference type="InterPro" id="IPR018278">
    <property type="entry name" value="Ribosomal_bS21_CS"/>
</dbReference>
<dbReference type="InterPro" id="IPR038380">
    <property type="entry name" value="Ribosomal_bS21_sf"/>
</dbReference>
<dbReference type="NCBIfam" id="TIGR00030">
    <property type="entry name" value="S21p"/>
    <property type="match status" value="1"/>
</dbReference>
<dbReference type="PANTHER" id="PTHR21109">
    <property type="entry name" value="MITOCHONDRIAL 28S RIBOSOMAL PROTEIN S21"/>
    <property type="match status" value="1"/>
</dbReference>
<dbReference type="PANTHER" id="PTHR21109:SF22">
    <property type="entry name" value="SMALL RIBOSOMAL SUBUNIT PROTEIN BS21"/>
    <property type="match status" value="1"/>
</dbReference>
<dbReference type="Pfam" id="PF01165">
    <property type="entry name" value="Ribosomal_S21"/>
    <property type="match status" value="1"/>
</dbReference>
<dbReference type="PRINTS" id="PR00976">
    <property type="entry name" value="RIBOSOMALS21"/>
</dbReference>
<dbReference type="PROSITE" id="PS01181">
    <property type="entry name" value="RIBOSOMAL_S21"/>
    <property type="match status" value="1"/>
</dbReference>
<keyword id="KW-1185">Reference proteome</keyword>
<keyword id="KW-0687">Ribonucleoprotein</keyword>
<keyword id="KW-0689">Ribosomal protein</keyword>
<evidence type="ECO:0000255" key="1">
    <source>
        <dbReference type="HAMAP-Rule" id="MF_00358"/>
    </source>
</evidence>
<evidence type="ECO:0000305" key="2"/>
<sequence length="71" mass="8606">MPIIKVRDNEPFDVALRRFKRSCEKAGILSEIRRREFYEKPTTERKRAKASAIKRLTKKLSRENLKRIRLY</sequence>
<comment type="similarity">
    <text evidence="1">Belongs to the bacterial ribosomal protein bS21 family.</text>
</comment>
<reference key="1">
    <citation type="journal article" date="2003" name="Proc. Natl. Acad. Sci. U.S.A.">
        <title>Reductive genome evolution in Buchnera aphidicola.</title>
        <authorList>
            <person name="van Ham R.C.H.J."/>
            <person name="Kamerbeek J."/>
            <person name="Palacios C."/>
            <person name="Rausell C."/>
            <person name="Abascal F."/>
            <person name="Bastolla U."/>
            <person name="Fernandez J.M."/>
            <person name="Jimenez L."/>
            <person name="Postigo M."/>
            <person name="Silva F.J."/>
            <person name="Tamames J."/>
            <person name="Viguera E."/>
            <person name="Latorre A."/>
            <person name="Valencia A."/>
            <person name="Moran F."/>
            <person name="Moya A."/>
        </authorList>
    </citation>
    <scope>NUCLEOTIDE SEQUENCE [LARGE SCALE GENOMIC DNA]</scope>
    <source>
        <strain>Bp</strain>
    </source>
</reference>
<feature type="chain" id="PRO_0000178314" description="Small ribosomal subunit protein bS21">
    <location>
        <begin position="1"/>
        <end position="71"/>
    </location>
</feature>
<proteinExistence type="inferred from homology"/>
<organism>
    <name type="scientific">Buchnera aphidicola subsp. Baizongia pistaciae (strain Bp)</name>
    <dbReference type="NCBI Taxonomy" id="224915"/>
    <lineage>
        <taxon>Bacteria</taxon>
        <taxon>Pseudomonadati</taxon>
        <taxon>Pseudomonadota</taxon>
        <taxon>Gammaproteobacteria</taxon>
        <taxon>Enterobacterales</taxon>
        <taxon>Erwiniaceae</taxon>
        <taxon>Buchnera</taxon>
    </lineage>
</organism>
<name>RS21_BUCBP</name>
<accession>Q89B08</accession>
<protein>
    <recommendedName>
        <fullName evidence="1">Small ribosomal subunit protein bS21</fullName>
    </recommendedName>
    <alternativeName>
        <fullName evidence="2">30S ribosomal protein S21</fullName>
    </alternativeName>
</protein>
<gene>
    <name evidence="1" type="primary">rpsU</name>
    <name type="ordered locus">bbp_054</name>
</gene>